<proteinExistence type="evidence at transcript level"/>
<dbReference type="EC" id="1.1.99.-" evidence="10"/>
<dbReference type="EMBL" id="AM920427">
    <property type="protein sequence ID" value="CAP80254.1"/>
    <property type="molecule type" value="Genomic_DNA"/>
</dbReference>
<dbReference type="RefSeq" id="XP_002557470.1">
    <property type="nucleotide sequence ID" value="XM_002557424.1"/>
</dbReference>
<dbReference type="SMR" id="B6H060"/>
<dbReference type="VEuPathDB" id="FungiDB:PCH_Pc12g06270"/>
<dbReference type="eggNOG" id="KOG4169">
    <property type="taxonomic scope" value="Eukaryota"/>
</dbReference>
<dbReference type="HOGENOM" id="CLU_010194_13_0_1"/>
<dbReference type="OMA" id="AIHFMRH"/>
<dbReference type="OrthoDB" id="5371740at2759"/>
<dbReference type="BioCyc" id="PCHR:PC12G06270-MONOMER"/>
<dbReference type="Proteomes" id="UP000000724">
    <property type="component" value="Contig Pc00c12"/>
</dbReference>
<dbReference type="GO" id="GO:0005737">
    <property type="term" value="C:cytoplasm"/>
    <property type="evidence" value="ECO:0007669"/>
    <property type="project" value="TreeGrafter"/>
</dbReference>
<dbReference type="GO" id="GO:0016491">
    <property type="term" value="F:oxidoreductase activity"/>
    <property type="evidence" value="ECO:0007669"/>
    <property type="project" value="UniProtKB-KW"/>
</dbReference>
<dbReference type="GO" id="GO:0044550">
    <property type="term" value="P:secondary metabolite biosynthetic process"/>
    <property type="evidence" value="ECO:0007669"/>
    <property type="project" value="UniProtKB-ARBA"/>
</dbReference>
<dbReference type="CDD" id="cd05323">
    <property type="entry name" value="ADH_SDR_c_like"/>
    <property type="match status" value="1"/>
</dbReference>
<dbReference type="Gene3D" id="3.40.50.720">
    <property type="entry name" value="NAD(P)-binding Rossmann-like Domain"/>
    <property type="match status" value="1"/>
</dbReference>
<dbReference type="InterPro" id="IPR036291">
    <property type="entry name" value="NAD(P)-bd_dom_sf"/>
</dbReference>
<dbReference type="InterPro" id="IPR020904">
    <property type="entry name" value="Sc_DH/Rdtase_CS"/>
</dbReference>
<dbReference type="InterPro" id="IPR002347">
    <property type="entry name" value="SDR_fam"/>
</dbReference>
<dbReference type="PANTHER" id="PTHR44229">
    <property type="entry name" value="15-HYDROXYPROSTAGLANDIN DEHYDROGENASE [NAD(+)]"/>
    <property type="match status" value="1"/>
</dbReference>
<dbReference type="PANTHER" id="PTHR44229:SF4">
    <property type="entry name" value="15-HYDROXYPROSTAGLANDIN DEHYDROGENASE [NAD(+)]"/>
    <property type="match status" value="1"/>
</dbReference>
<dbReference type="Pfam" id="PF00106">
    <property type="entry name" value="adh_short"/>
    <property type="match status" value="1"/>
</dbReference>
<dbReference type="PRINTS" id="PR00081">
    <property type="entry name" value="GDHRDH"/>
</dbReference>
<dbReference type="SUPFAM" id="SSF51735">
    <property type="entry name" value="NAD(P)-binding Rossmann-fold domains"/>
    <property type="match status" value="1"/>
</dbReference>
<dbReference type="PROSITE" id="PS00061">
    <property type="entry name" value="ADH_SHORT"/>
    <property type="match status" value="1"/>
</dbReference>
<sequence length="298" mass="32254">MGSYTEPRVAIVAGATSLTRDPLQSGIGIDLAKDLCSKGWKVACVGRRQEAGEALLKDLPQDRAYFFAADVSNYEQYASVFSKVHHLWGRIDALCANAGIVDTSSLYIYGSKNNGVDNIPPAPDLSVVDINYKGVVYGTQLAIHFMRHNPQPGGRIVVTGSIGAVFPHKTYPVYCGTKAAVNHFIRGVAPLLKQKENISINCVMPGIVNTPIVPPEMIAAVTPECITPVQTVLRGYETFLEDSTGMAGEILECSADKLIYYHMPKPGNGHITKRAVTVWEPLFRMSHGEVSGLPDAIP</sequence>
<feature type="chain" id="PRO_0000451218" description="Short-chain dehydrogenase/reductase prx6">
    <location>
        <begin position="1"/>
        <end position="298"/>
    </location>
</feature>
<feature type="active site" description="Proton acceptor" evidence="6">
    <location>
        <position position="174"/>
    </location>
</feature>
<feature type="active site" description="Lowers pKa of active site Tyr" evidence="2">
    <location>
        <position position="178"/>
    </location>
</feature>
<feature type="binding site" evidence="1">
    <location>
        <position position="27"/>
    </location>
    <ligand>
        <name>NADP(+)</name>
        <dbReference type="ChEBI" id="CHEBI:58349"/>
    </ligand>
</feature>
<feature type="binding site" evidence="1">
    <location>
        <position position="70"/>
    </location>
    <ligand>
        <name>NADP(+)</name>
        <dbReference type="ChEBI" id="CHEBI:58349"/>
    </ligand>
</feature>
<feature type="binding site" evidence="2">
    <location>
        <position position="97"/>
    </location>
    <ligand>
        <name>NADP(+)</name>
        <dbReference type="ChEBI" id="CHEBI:58349"/>
    </ligand>
</feature>
<feature type="binding site" evidence="2">
    <location>
        <position position="174"/>
    </location>
    <ligand>
        <name>NADP(+)</name>
        <dbReference type="ChEBI" id="CHEBI:58349"/>
    </ligand>
</feature>
<feature type="binding site" evidence="2">
    <location>
        <position position="178"/>
    </location>
    <ligand>
        <name>NADP(+)</name>
        <dbReference type="ChEBI" id="CHEBI:58349"/>
    </ligand>
</feature>
<feature type="binding site" evidence="2">
    <location>
        <position position="208"/>
    </location>
    <ligand>
        <name>NADP(+)</name>
        <dbReference type="ChEBI" id="CHEBI:58349"/>
    </ligand>
</feature>
<feature type="binding site" evidence="1">
    <location>
        <position position="210"/>
    </location>
    <ligand>
        <name>NADP(+)</name>
        <dbReference type="ChEBI" id="CHEBI:58349"/>
    </ligand>
</feature>
<gene>
    <name evidence="8" type="primary">prx6</name>
    <name type="ORF">Pc12g06270</name>
    <name type="ORF">PCH_Pc12g06270</name>
</gene>
<keyword id="KW-0521">NADP</keyword>
<keyword id="KW-0560">Oxidoreductase</keyword>
<keyword id="KW-1185">Reference proteome</keyword>
<name>PRX6_PENRW</name>
<protein>
    <recommendedName>
        <fullName evidence="8">Short-chain dehydrogenase/reductase prx6</fullName>
        <ecNumber evidence="10">1.1.99.-</ecNumber>
    </recommendedName>
    <alternativeName>
        <fullName evidence="8">PR-toxin biosynthesis cluster protein 6</fullName>
    </alternativeName>
</protein>
<accession>B6H060</accession>
<organism>
    <name type="scientific">Penicillium rubens (strain ATCC 28089 / DSM 1075 / NRRL 1951 / Wisconsin 54-1255)</name>
    <name type="common">Penicillium chrysogenum</name>
    <dbReference type="NCBI Taxonomy" id="500485"/>
    <lineage>
        <taxon>Eukaryota</taxon>
        <taxon>Fungi</taxon>
        <taxon>Dikarya</taxon>
        <taxon>Ascomycota</taxon>
        <taxon>Pezizomycotina</taxon>
        <taxon>Eurotiomycetes</taxon>
        <taxon>Eurotiomycetidae</taxon>
        <taxon>Eurotiales</taxon>
        <taxon>Aspergillaceae</taxon>
        <taxon>Penicillium</taxon>
        <taxon>Penicillium chrysogenum species complex</taxon>
    </lineage>
</organism>
<comment type="function">
    <text evidence="3 4 5 7">Short-chain dehydrogenase/reductase; part of the gene cluster that mediates the biosynthesis of PR-toxin, a bicyclic sesquiterpene belonging to the eremophilane class and acting as a mycotoxin (PubMed:24239699). The first step of the pathway is catalyzed by the aristolochene synthase which performs the cyclization of trans,trans-farnesyl diphosphate (FPP) to the bicyclic sesquiterpene aristolochene (PubMed:24239699). Following the formation of aristolochene, the non-oxygenated aristolochene is converted to the trioxygenated intermediate eremofortin B, via 7-epi-neopetasone (PubMed:24239699). This conversion appears to involve three enzymes, a hydroxysterol oxidase-like enzyme, the quinone-oxidase prx3 that forms the quinone-type-structure in the bicyclic nucleus of aristolochene with the C8-oxo group and the C-3 hydroxyl group, and the P450 monooxygenase prx9 that introduces the epoxide at the double bond between carbons 1 and 2 (By similarity) (PubMed:24239699). No monoxy or dioxy-intermediates have been reported to be released to the broth, so these three early oxidative reactions may be coupled together (PubMed:24239699). Eremofortin B is further oxidized by another P450 monooxygenase, that introduces a second epoxide between carbons 7 and 11 prior to acetylation to eremofortin A by the acetyltransferase prx11 (By similarity). The second epoxidation may be performed by a second P450 monooxygenase (PubMed:24239699). After the acetylation step, eremofortin A is converted to eremofortin C and then to PR-toxin (PubMed:24239699). First the conversion of eremofortin A to eremofortin C proceeds by oxidation of the side chain of the molecule at C-12 and is catalyzed by the short-chain oxidoreductase prx1 (PubMed:24239699). The cytochrome P450 monooxygenase prx8 also plays a role in this step (By similarity). The primary alcohol formed at C-12 is finally oxidized by the short-chain alcohol dehydrogenase prx4 that forms PR-toxin (PubMed:24239699).</text>
</comment>
<comment type="pathway">
    <text evidence="10">Sesquiterpene biosynthesis.</text>
</comment>
<comment type="induction">
    <text evidence="7">Expression and the subsequent production of PR-toxin take place under static culture conditions (oxygen limited), whereas no expression of the PR-toxin genes occurs under the strongly aerated conditions required for optimal penicillin production (PubMed:24239699). There is a negative control of the transcription of the PR-toxin genes by the penicillin biosynthesis gene product(s), or by a regulatory peptide encoded by a small ORF inside the penicillin gene cluster (PubMed:24239699).</text>
</comment>
<comment type="similarity">
    <text evidence="9">Belongs to the short-chain dehydrogenases/reductases (SDR) family.</text>
</comment>
<reference key="1">
    <citation type="journal article" date="2008" name="Nat. Biotechnol.">
        <title>Genome sequencing and analysis of the filamentous fungus Penicillium chrysogenum.</title>
        <authorList>
            <person name="van den Berg M.A."/>
            <person name="Albang R."/>
            <person name="Albermann K."/>
            <person name="Badger J.H."/>
            <person name="Daran J.-M."/>
            <person name="Driessen A.J.M."/>
            <person name="Garcia-Estrada C."/>
            <person name="Fedorova N.D."/>
            <person name="Harris D.M."/>
            <person name="Heijne W.H.M."/>
            <person name="Joardar V.S."/>
            <person name="Kiel J.A.K.W."/>
            <person name="Kovalchuk A."/>
            <person name="Martin J.F."/>
            <person name="Nierman W.C."/>
            <person name="Nijland J.G."/>
            <person name="Pronk J.T."/>
            <person name="Roubos J.A."/>
            <person name="van der Klei I.J."/>
            <person name="van Peij N.N.M.E."/>
            <person name="Veenhuis M."/>
            <person name="von Doehren H."/>
            <person name="Wagner C."/>
            <person name="Wortman J.R."/>
            <person name="Bovenberg R.A.L."/>
        </authorList>
    </citation>
    <scope>NUCLEOTIDE SEQUENCE [LARGE SCALE GENOMIC DNA]</scope>
    <source>
        <strain>ATCC 28089 / DSM 1075 / NRRL 1951 / Wisconsin 54-1255</strain>
    </source>
</reference>
<reference key="2">
    <citation type="journal article" date="2014" name="Fungal Genet. Biol.">
        <title>Molecular characterization of the PR-toxin gene cluster in Penicillium roqueforti and Penicillium chrysogenum: cross talk of secondary metabolite pathways.</title>
        <authorList>
            <person name="Hidalgo P.I."/>
            <person name="Ullan R.V."/>
            <person name="Albillos S.M."/>
            <person name="Montero O."/>
            <person name="Fernandez-Bodega M.A."/>
            <person name="Garcia-Estrada C."/>
            <person name="Fernandez-Aguado M."/>
            <person name="Martin J.F."/>
        </authorList>
    </citation>
    <scope>FUNCTION</scope>
    <scope>INDUCTION</scope>
    <scope>PATHWAY</scope>
</reference>
<evidence type="ECO:0000250" key="1">
    <source>
        <dbReference type="UniProtKB" id="L0E2Z4"/>
    </source>
</evidence>
<evidence type="ECO:0000250" key="2">
    <source>
        <dbReference type="UniProtKB" id="O93868"/>
    </source>
</evidence>
<evidence type="ECO:0000250" key="3">
    <source>
        <dbReference type="UniProtKB" id="W6Q3Z9"/>
    </source>
</evidence>
<evidence type="ECO:0000250" key="4">
    <source>
        <dbReference type="UniProtKB" id="W6QB15"/>
    </source>
</evidence>
<evidence type="ECO:0000250" key="5">
    <source>
        <dbReference type="UniProtKB" id="W6QP10"/>
    </source>
</evidence>
<evidence type="ECO:0000255" key="6">
    <source>
        <dbReference type="PROSITE-ProRule" id="PRU10001"/>
    </source>
</evidence>
<evidence type="ECO:0000269" key="7">
    <source>
    </source>
</evidence>
<evidence type="ECO:0000303" key="8">
    <source>
    </source>
</evidence>
<evidence type="ECO:0000305" key="9"/>
<evidence type="ECO:0000305" key="10">
    <source>
    </source>
</evidence>